<gene>
    <name evidence="1" type="primary">pcm</name>
    <name type="ordered locus">TON_1176</name>
</gene>
<accession>B6YX51</accession>
<reference key="1">
    <citation type="journal article" date="2008" name="J. Bacteriol.">
        <title>The complete genome sequence of Thermococcus onnurineus NA1 reveals a mixed heterotrophic and carboxydotrophic metabolism.</title>
        <authorList>
            <person name="Lee H.S."/>
            <person name="Kang S.G."/>
            <person name="Bae S.S."/>
            <person name="Lim J.K."/>
            <person name="Cho Y."/>
            <person name="Kim Y.J."/>
            <person name="Jeon J.H."/>
            <person name="Cha S.-S."/>
            <person name="Kwon K.K."/>
            <person name="Kim H.-T."/>
            <person name="Park C.-J."/>
            <person name="Lee H.-W."/>
            <person name="Kim S.I."/>
            <person name="Chun J."/>
            <person name="Colwell R.R."/>
            <person name="Kim S.-J."/>
            <person name="Lee J.-H."/>
        </authorList>
    </citation>
    <scope>NUCLEOTIDE SEQUENCE [LARGE SCALE GENOMIC DNA]</scope>
    <source>
        <strain>NA1</strain>
    </source>
</reference>
<organism>
    <name type="scientific">Thermococcus onnurineus (strain NA1)</name>
    <dbReference type="NCBI Taxonomy" id="523850"/>
    <lineage>
        <taxon>Archaea</taxon>
        <taxon>Methanobacteriati</taxon>
        <taxon>Methanobacteriota</taxon>
        <taxon>Thermococci</taxon>
        <taxon>Thermococcales</taxon>
        <taxon>Thermococcaceae</taxon>
        <taxon>Thermococcus</taxon>
    </lineage>
</organism>
<dbReference type="EC" id="2.1.1.77" evidence="1"/>
<dbReference type="EMBL" id="CP000855">
    <property type="protein sequence ID" value="ACJ16664.1"/>
    <property type="molecule type" value="Genomic_DNA"/>
</dbReference>
<dbReference type="RefSeq" id="WP_012572136.1">
    <property type="nucleotide sequence ID" value="NC_011529.1"/>
</dbReference>
<dbReference type="SMR" id="B6YX51"/>
<dbReference type="STRING" id="523850.TON_1176"/>
<dbReference type="GeneID" id="7018198"/>
<dbReference type="KEGG" id="ton:TON_1176"/>
<dbReference type="PATRIC" id="fig|523850.10.peg.1183"/>
<dbReference type="eggNOG" id="arCOG00976">
    <property type="taxonomic scope" value="Archaea"/>
</dbReference>
<dbReference type="HOGENOM" id="CLU_055432_2_0_2"/>
<dbReference type="Proteomes" id="UP000002727">
    <property type="component" value="Chromosome"/>
</dbReference>
<dbReference type="GO" id="GO:0005737">
    <property type="term" value="C:cytoplasm"/>
    <property type="evidence" value="ECO:0007669"/>
    <property type="project" value="UniProtKB-SubCell"/>
</dbReference>
<dbReference type="GO" id="GO:0004719">
    <property type="term" value="F:protein-L-isoaspartate (D-aspartate) O-methyltransferase activity"/>
    <property type="evidence" value="ECO:0007669"/>
    <property type="project" value="UniProtKB-UniRule"/>
</dbReference>
<dbReference type="GO" id="GO:0032259">
    <property type="term" value="P:methylation"/>
    <property type="evidence" value="ECO:0007669"/>
    <property type="project" value="UniProtKB-KW"/>
</dbReference>
<dbReference type="GO" id="GO:0036211">
    <property type="term" value="P:protein modification process"/>
    <property type="evidence" value="ECO:0007669"/>
    <property type="project" value="UniProtKB-UniRule"/>
</dbReference>
<dbReference type="GO" id="GO:0030091">
    <property type="term" value="P:protein repair"/>
    <property type="evidence" value="ECO:0007669"/>
    <property type="project" value="UniProtKB-UniRule"/>
</dbReference>
<dbReference type="CDD" id="cd02440">
    <property type="entry name" value="AdoMet_MTases"/>
    <property type="match status" value="1"/>
</dbReference>
<dbReference type="FunFam" id="3.40.50.150:FF:000010">
    <property type="entry name" value="Protein-L-isoaspartate O-methyltransferase"/>
    <property type="match status" value="1"/>
</dbReference>
<dbReference type="Gene3D" id="3.40.50.150">
    <property type="entry name" value="Vaccinia Virus protein VP39"/>
    <property type="match status" value="1"/>
</dbReference>
<dbReference type="HAMAP" id="MF_00090">
    <property type="entry name" value="PIMT"/>
    <property type="match status" value="1"/>
</dbReference>
<dbReference type="InterPro" id="IPR000682">
    <property type="entry name" value="PCMT"/>
</dbReference>
<dbReference type="InterPro" id="IPR029063">
    <property type="entry name" value="SAM-dependent_MTases_sf"/>
</dbReference>
<dbReference type="NCBIfam" id="TIGR00080">
    <property type="entry name" value="pimt"/>
    <property type="match status" value="1"/>
</dbReference>
<dbReference type="NCBIfam" id="NF001453">
    <property type="entry name" value="PRK00312.1"/>
    <property type="match status" value="1"/>
</dbReference>
<dbReference type="PANTHER" id="PTHR11579">
    <property type="entry name" value="PROTEIN-L-ISOASPARTATE O-METHYLTRANSFERASE"/>
    <property type="match status" value="1"/>
</dbReference>
<dbReference type="PANTHER" id="PTHR11579:SF0">
    <property type="entry name" value="PROTEIN-L-ISOASPARTATE(D-ASPARTATE) O-METHYLTRANSFERASE"/>
    <property type="match status" value="1"/>
</dbReference>
<dbReference type="Pfam" id="PF01135">
    <property type="entry name" value="PCMT"/>
    <property type="match status" value="1"/>
</dbReference>
<dbReference type="SUPFAM" id="SSF53335">
    <property type="entry name" value="S-adenosyl-L-methionine-dependent methyltransferases"/>
    <property type="match status" value="1"/>
</dbReference>
<dbReference type="PROSITE" id="PS01279">
    <property type="entry name" value="PCMT"/>
    <property type="match status" value="1"/>
</dbReference>
<comment type="function">
    <text evidence="1">Catalyzes the methyl esterification of L-isoaspartyl residues in peptides and proteins that result from spontaneous decomposition of normal L-aspartyl and L-asparaginyl residues. It plays a role in the repair and/or degradation of damaged proteins.</text>
</comment>
<comment type="catalytic activity">
    <reaction evidence="1">
        <text>[protein]-L-isoaspartate + S-adenosyl-L-methionine = [protein]-L-isoaspartate alpha-methyl ester + S-adenosyl-L-homocysteine</text>
        <dbReference type="Rhea" id="RHEA:12705"/>
        <dbReference type="Rhea" id="RHEA-COMP:12143"/>
        <dbReference type="Rhea" id="RHEA-COMP:12144"/>
        <dbReference type="ChEBI" id="CHEBI:57856"/>
        <dbReference type="ChEBI" id="CHEBI:59789"/>
        <dbReference type="ChEBI" id="CHEBI:90596"/>
        <dbReference type="ChEBI" id="CHEBI:90598"/>
        <dbReference type="EC" id="2.1.1.77"/>
    </reaction>
</comment>
<comment type="subcellular location">
    <subcellularLocation>
        <location evidence="1">Cytoplasm</location>
    </subcellularLocation>
</comment>
<comment type="similarity">
    <text evidence="1">Belongs to the methyltransferase superfamily. L-isoaspartyl/D-aspartyl protein methyltransferase family.</text>
</comment>
<protein>
    <recommendedName>
        <fullName evidence="1">Protein-L-isoaspartate O-methyltransferase</fullName>
        <ecNumber evidence="1">2.1.1.77</ecNumber>
    </recommendedName>
    <alternativeName>
        <fullName evidence="1">L-isoaspartyl protein carboxyl methyltransferase</fullName>
    </alternativeName>
    <alternativeName>
        <fullName evidence="1">Protein L-isoaspartyl methyltransferase</fullName>
    </alternativeName>
    <alternativeName>
        <fullName evidence="1">Protein-beta-aspartate methyltransferase</fullName>
        <shortName evidence="1">PIMT</shortName>
    </alternativeName>
</protein>
<evidence type="ECO:0000255" key="1">
    <source>
        <dbReference type="HAMAP-Rule" id="MF_00090"/>
    </source>
</evidence>
<feature type="chain" id="PRO_1000093296" description="Protein-L-isoaspartate O-methyltransferase">
    <location>
        <begin position="1"/>
        <end position="220"/>
    </location>
</feature>
<feature type="active site" evidence="1">
    <location>
        <position position="64"/>
    </location>
</feature>
<proteinExistence type="inferred from homology"/>
<name>PIMT_THEON</name>
<sequence>MLMEDADVLWYHTVEKLKREGIIRSEKVRQAFLKVPRYLFVLPEHKKWAHVDEPLPIPGGQTISAPHMVAIMLELAELEEGMNVLDIGTGSGWNAALAAELVKTDVYTVERIPELVEFARKNLEKAGYADRVHVIIGDGTKGFPPKAPYDRILVAAGAPNVPEPLVEQLKPGGKLIIPVGSYHLWQELYEVIKLKDGSVKVKRHGGVAFVPLIGEHGWKE</sequence>
<keyword id="KW-0963">Cytoplasm</keyword>
<keyword id="KW-0489">Methyltransferase</keyword>
<keyword id="KW-0949">S-adenosyl-L-methionine</keyword>
<keyword id="KW-0808">Transferase</keyword>